<feature type="chain" id="PRO_0000100962" description="Threonine--tRNA ligase">
    <location>
        <begin position="1"/>
        <end position="657"/>
    </location>
</feature>
<feature type="domain" description="TGS" evidence="2">
    <location>
        <begin position="7"/>
        <end position="70"/>
    </location>
</feature>
<feature type="region of interest" description="Catalytic" evidence="1">
    <location>
        <begin position="253"/>
        <end position="555"/>
    </location>
</feature>
<feature type="binding site" evidence="1">
    <location>
        <position position="351"/>
    </location>
    <ligand>
        <name>Zn(2+)</name>
        <dbReference type="ChEBI" id="CHEBI:29105"/>
    </ligand>
</feature>
<feature type="binding site" evidence="1">
    <location>
        <position position="402"/>
    </location>
    <ligand>
        <name>Zn(2+)</name>
        <dbReference type="ChEBI" id="CHEBI:29105"/>
    </ligand>
</feature>
<feature type="binding site" evidence="1">
    <location>
        <position position="532"/>
    </location>
    <ligand>
        <name>Zn(2+)</name>
        <dbReference type="ChEBI" id="CHEBI:29105"/>
    </ligand>
</feature>
<accession>Q8KAN0</accession>
<name>SYT_CHLTE</name>
<keyword id="KW-0030">Aminoacyl-tRNA synthetase</keyword>
<keyword id="KW-0067">ATP-binding</keyword>
<keyword id="KW-0963">Cytoplasm</keyword>
<keyword id="KW-0436">Ligase</keyword>
<keyword id="KW-0479">Metal-binding</keyword>
<keyword id="KW-0547">Nucleotide-binding</keyword>
<keyword id="KW-0648">Protein biosynthesis</keyword>
<keyword id="KW-1185">Reference proteome</keyword>
<keyword id="KW-0694">RNA-binding</keyword>
<keyword id="KW-0820">tRNA-binding</keyword>
<keyword id="KW-0862">Zinc</keyword>
<sequence>MSEITDDRQQVIITLPDGSERTYSSGVTGLEIAESIGKKLAEAALAFTIDGKPRDLDTPVTENARVSIITFDSPEGKEIFWHSSSHLMAHAIEELFPGAKFGAGPAIEQGFYYDIACEHRFNEEDLRAIEAKMLEISKRNLSINREEMPREQAIEYFSNERKDPYKVEILEDTLKDVPTVSVYHQDGFADLCSGPHLPSTGKVKAVLLTNISSSYWRGDSSRETMQRIYGITFPSDKLLKEHIARLEEARKRDHRKLGAELGLFMLTPEVGSGLPIWLPNGAIIRNELETFLKAEQRKRGYVPVYTPHIGNIELYKRSGHYPYYSDSQFPPLTYKDETGREEQYLLKPMNCPHHHLIYSQTLRSYRDLPIRLTEFGTVYRHEQSGELNGLVRARGFTQDDSHIYCRPDQLVDEICNAIDLTRFVFNTLGFDEVETRLSLHDPENQSKYGGTAEVWGQAEKDVKEAADRMGIKYFIGIGEASFYGPKIDFIVRDAIGRKWQLGTVQVDYVMPERFDLSYIGSDGQKHRPVVIHRAPFGSMERFIGVLIEHTAGNFPLWLAPVQAVVLPIAEEVHDYAREVYAKLHEAGIRTELDLRSEKIGKKIREAELSKIPAMLVIGRNEQEKGEVSLRRHRKGDEGSFGVDELIARLCEERDRRF</sequence>
<organism>
    <name type="scientific">Chlorobaculum tepidum (strain ATCC 49652 / DSM 12025 / NBRC 103806 / TLS)</name>
    <name type="common">Chlorobium tepidum</name>
    <dbReference type="NCBI Taxonomy" id="194439"/>
    <lineage>
        <taxon>Bacteria</taxon>
        <taxon>Pseudomonadati</taxon>
        <taxon>Chlorobiota</taxon>
        <taxon>Chlorobiia</taxon>
        <taxon>Chlorobiales</taxon>
        <taxon>Chlorobiaceae</taxon>
        <taxon>Chlorobaculum</taxon>
    </lineage>
</organism>
<evidence type="ECO:0000255" key="1">
    <source>
        <dbReference type="HAMAP-Rule" id="MF_00184"/>
    </source>
</evidence>
<evidence type="ECO:0000255" key="2">
    <source>
        <dbReference type="PROSITE-ProRule" id="PRU01228"/>
    </source>
</evidence>
<proteinExistence type="inferred from homology"/>
<dbReference type="EC" id="6.1.1.3" evidence="1"/>
<dbReference type="EMBL" id="AE006470">
    <property type="protein sequence ID" value="AAM73342.1"/>
    <property type="molecule type" value="Genomic_DNA"/>
</dbReference>
<dbReference type="RefSeq" id="NP_663000.1">
    <property type="nucleotide sequence ID" value="NC_002932.3"/>
</dbReference>
<dbReference type="RefSeq" id="WP_010933780.1">
    <property type="nucleotide sequence ID" value="NC_002932.3"/>
</dbReference>
<dbReference type="SMR" id="Q8KAN0"/>
<dbReference type="STRING" id="194439.CT2126"/>
<dbReference type="EnsemblBacteria" id="AAM73342">
    <property type="protein sequence ID" value="AAM73342"/>
    <property type="gene ID" value="CT2126"/>
</dbReference>
<dbReference type="KEGG" id="cte:CT2126"/>
<dbReference type="PATRIC" id="fig|194439.7.peg.1927"/>
<dbReference type="eggNOG" id="COG0441">
    <property type="taxonomic scope" value="Bacteria"/>
</dbReference>
<dbReference type="HOGENOM" id="CLU_008554_0_1_10"/>
<dbReference type="OrthoDB" id="9802304at2"/>
<dbReference type="Proteomes" id="UP000001007">
    <property type="component" value="Chromosome"/>
</dbReference>
<dbReference type="GO" id="GO:0005737">
    <property type="term" value="C:cytoplasm"/>
    <property type="evidence" value="ECO:0007669"/>
    <property type="project" value="UniProtKB-SubCell"/>
</dbReference>
<dbReference type="GO" id="GO:0005524">
    <property type="term" value="F:ATP binding"/>
    <property type="evidence" value="ECO:0007669"/>
    <property type="project" value="UniProtKB-UniRule"/>
</dbReference>
<dbReference type="GO" id="GO:0046872">
    <property type="term" value="F:metal ion binding"/>
    <property type="evidence" value="ECO:0007669"/>
    <property type="project" value="UniProtKB-KW"/>
</dbReference>
<dbReference type="GO" id="GO:0004829">
    <property type="term" value="F:threonine-tRNA ligase activity"/>
    <property type="evidence" value="ECO:0007669"/>
    <property type="project" value="UniProtKB-UniRule"/>
</dbReference>
<dbReference type="GO" id="GO:0000049">
    <property type="term" value="F:tRNA binding"/>
    <property type="evidence" value="ECO:0007669"/>
    <property type="project" value="UniProtKB-KW"/>
</dbReference>
<dbReference type="GO" id="GO:0006435">
    <property type="term" value="P:threonyl-tRNA aminoacylation"/>
    <property type="evidence" value="ECO:0007669"/>
    <property type="project" value="UniProtKB-UniRule"/>
</dbReference>
<dbReference type="CDD" id="cd01667">
    <property type="entry name" value="TGS_ThrRS"/>
    <property type="match status" value="1"/>
</dbReference>
<dbReference type="CDD" id="cd00860">
    <property type="entry name" value="ThrRS_anticodon"/>
    <property type="match status" value="1"/>
</dbReference>
<dbReference type="CDD" id="cd00771">
    <property type="entry name" value="ThrRS_core"/>
    <property type="match status" value="1"/>
</dbReference>
<dbReference type="FunFam" id="3.30.930.10:FF:000002">
    <property type="entry name" value="Threonine--tRNA ligase"/>
    <property type="match status" value="1"/>
</dbReference>
<dbReference type="FunFam" id="3.40.50.800:FF:000001">
    <property type="entry name" value="Threonine--tRNA ligase"/>
    <property type="match status" value="1"/>
</dbReference>
<dbReference type="FunFam" id="3.30.980.10:FF:000005">
    <property type="entry name" value="Threonyl-tRNA synthetase, mitochondrial"/>
    <property type="match status" value="1"/>
</dbReference>
<dbReference type="Gene3D" id="3.10.20.30">
    <property type="match status" value="1"/>
</dbReference>
<dbReference type="Gene3D" id="3.30.54.20">
    <property type="match status" value="1"/>
</dbReference>
<dbReference type="Gene3D" id="3.40.50.800">
    <property type="entry name" value="Anticodon-binding domain"/>
    <property type="match status" value="1"/>
</dbReference>
<dbReference type="Gene3D" id="3.30.930.10">
    <property type="entry name" value="Bira Bifunctional Protein, Domain 2"/>
    <property type="match status" value="1"/>
</dbReference>
<dbReference type="Gene3D" id="3.30.980.10">
    <property type="entry name" value="Threonyl-trna Synthetase, Chain A, domain 2"/>
    <property type="match status" value="1"/>
</dbReference>
<dbReference type="HAMAP" id="MF_00184">
    <property type="entry name" value="Thr_tRNA_synth"/>
    <property type="match status" value="1"/>
</dbReference>
<dbReference type="InterPro" id="IPR002314">
    <property type="entry name" value="aa-tRNA-synt_IIb"/>
</dbReference>
<dbReference type="InterPro" id="IPR006195">
    <property type="entry name" value="aa-tRNA-synth_II"/>
</dbReference>
<dbReference type="InterPro" id="IPR045864">
    <property type="entry name" value="aa-tRNA-synth_II/BPL/LPL"/>
</dbReference>
<dbReference type="InterPro" id="IPR004154">
    <property type="entry name" value="Anticodon-bd"/>
</dbReference>
<dbReference type="InterPro" id="IPR036621">
    <property type="entry name" value="Anticodon-bd_dom_sf"/>
</dbReference>
<dbReference type="InterPro" id="IPR012675">
    <property type="entry name" value="Beta-grasp_dom_sf"/>
</dbReference>
<dbReference type="InterPro" id="IPR004095">
    <property type="entry name" value="TGS"/>
</dbReference>
<dbReference type="InterPro" id="IPR012676">
    <property type="entry name" value="TGS-like"/>
</dbReference>
<dbReference type="InterPro" id="IPR002320">
    <property type="entry name" value="Thr-tRNA-ligase_IIa"/>
</dbReference>
<dbReference type="InterPro" id="IPR018163">
    <property type="entry name" value="Thr/Ala-tRNA-synth_IIc_edit"/>
</dbReference>
<dbReference type="InterPro" id="IPR047246">
    <property type="entry name" value="ThrRS_anticodon"/>
</dbReference>
<dbReference type="InterPro" id="IPR033728">
    <property type="entry name" value="ThrRS_core"/>
</dbReference>
<dbReference type="InterPro" id="IPR012947">
    <property type="entry name" value="tRNA_SAD"/>
</dbReference>
<dbReference type="NCBIfam" id="TIGR00418">
    <property type="entry name" value="thrS"/>
    <property type="match status" value="1"/>
</dbReference>
<dbReference type="PANTHER" id="PTHR11451:SF44">
    <property type="entry name" value="THREONINE--TRNA LIGASE, CHLOROPLASTIC_MITOCHONDRIAL 2"/>
    <property type="match status" value="1"/>
</dbReference>
<dbReference type="PANTHER" id="PTHR11451">
    <property type="entry name" value="THREONINE-TRNA LIGASE"/>
    <property type="match status" value="1"/>
</dbReference>
<dbReference type="Pfam" id="PF03129">
    <property type="entry name" value="HGTP_anticodon"/>
    <property type="match status" value="1"/>
</dbReference>
<dbReference type="Pfam" id="PF02824">
    <property type="entry name" value="TGS"/>
    <property type="match status" value="1"/>
</dbReference>
<dbReference type="Pfam" id="PF00587">
    <property type="entry name" value="tRNA-synt_2b"/>
    <property type="match status" value="1"/>
</dbReference>
<dbReference type="Pfam" id="PF07973">
    <property type="entry name" value="tRNA_SAD"/>
    <property type="match status" value="1"/>
</dbReference>
<dbReference type="PRINTS" id="PR01047">
    <property type="entry name" value="TRNASYNTHTHR"/>
</dbReference>
<dbReference type="SMART" id="SM00863">
    <property type="entry name" value="tRNA_SAD"/>
    <property type="match status" value="1"/>
</dbReference>
<dbReference type="SUPFAM" id="SSF52954">
    <property type="entry name" value="Class II aaRS ABD-related"/>
    <property type="match status" value="1"/>
</dbReference>
<dbReference type="SUPFAM" id="SSF55681">
    <property type="entry name" value="Class II aaRS and biotin synthetases"/>
    <property type="match status" value="1"/>
</dbReference>
<dbReference type="SUPFAM" id="SSF81271">
    <property type="entry name" value="TGS-like"/>
    <property type="match status" value="1"/>
</dbReference>
<dbReference type="SUPFAM" id="SSF55186">
    <property type="entry name" value="ThrRS/AlaRS common domain"/>
    <property type="match status" value="1"/>
</dbReference>
<dbReference type="PROSITE" id="PS50862">
    <property type="entry name" value="AA_TRNA_LIGASE_II"/>
    <property type="match status" value="1"/>
</dbReference>
<dbReference type="PROSITE" id="PS51880">
    <property type="entry name" value="TGS"/>
    <property type="match status" value="1"/>
</dbReference>
<reference key="1">
    <citation type="journal article" date="2002" name="Proc. Natl. Acad. Sci. U.S.A.">
        <title>The complete genome sequence of Chlorobium tepidum TLS, a photosynthetic, anaerobic, green-sulfur bacterium.</title>
        <authorList>
            <person name="Eisen J.A."/>
            <person name="Nelson K.E."/>
            <person name="Paulsen I.T."/>
            <person name="Heidelberg J.F."/>
            <person name="Wu M."/>
            <person name="Dodson R.J."/>
            <person name="DeBoy R.T."/>
            <person name="Gwinn M.L."/>
            <person name="Nelson W.C."/>
            <person name="Haft D.H."/>
            <person name="Hickey E.K."/>
            <person name="Peterson J.D."/>
            <person name="Durkin A.S."/>
            <person name="Kolonay J.F."/>
            <person name="Yang F."/>
            <person name="Holt I.E."/>
            <person name="Umayam L.A."/>
            <person name="Mason T.M."/>
            <person name="Brenner M."/>
            <person name="Shea T.P."/>
            <person name="Parksey D.S."/>
            <person name="Nierman W.C."/>
            <person name="Feldblyum T.V."/>
            <person name="Hansen C.L."/>
            <person name="Craven M.B."/>
            <person name="Radune D."/>
            <person name="Vamathevan J.J."/>
            <person name="Khouri H.M."/>
            <person name="White O."/>
            <person name="Gruber T.M."/>
            <person name="Ketchum K.A."/>
            <person name="Venter J.C."/>
            <person name="Tettelin H."/>
            <person name="Bryant D.A."/>
            <person name="Fraser C.M."/>
        </authorList>
    </citation>
    <scope>NUCLEOTIDE SEQUENCE [LARGE SCALE GENOMIC DNA]</scope>
    <source>
        <strain>ATCC 49652 / DSM 12025 / NBRC 103806 / TLS</strain>
    </source>
</reference>
<gene>
    <name evidence="1" type="primary">thrS</name>
    <name type="ordered locus">CT2126</name>
</gene>
<protein>
    <recommendedName>
        <fullName evidence="1">Threonine--tRNA ligase</fullName>
        <ecNumber evidence="1">6.1.1.3</ecNumber>
    </recommendedName>
    <alternativeName>
        <fullName evidence="1">Threonyl-tRNA synthetase</fullName>
        <shortName evidence="1">ThrRS</shortName>
    </alternativeName>
</protein>
<comment type="function">
    <text evidence="1">Catalyzes the attachment of threonine to tRNA(Thr) in a two-step reaction: L-threonine is first activated by ATP to form Thr-AMP and then transferred to the acceptor end of tRNA(Thr). Also edits incorrectly charged L-seryl-tRNA(Thr).</text>
</comment>
<comment type="catalytic activity">
    <reaction evidence="1">
        <text>tRNA(Thr) + L-threonine + ATP = L-threonyl-tRNA(Thr) + AMP + diphosphate + H(+)</text>
        <dbReference type="Rhea" id="RHEA:24624"/>
        <dbReference type="Rhea" id="RHEA-COMP:9670"/>
        <dbReference type="Rhea" id="RHEA-COMP:9704"/>
        <dbReference type="ChEBI" id="CHEBI:15378"/>
        <dbReference type="ChEBI" id="CHEBI:30616"/>
        <dbReference type="ChEBI" id="CHEBI:33019"/>
        <dbReference type="ChEBI" id="CHEBI:57926"/>
        <dbReference type="ChEBI" id="CHEBI:78442"/>
        <dbReference type="ChEBI" id="CHEBI:78534"/>
        <dbReference type="ChEBI" id="CHEBI:456215"/>
        <dbReference type="EC" id="6.1.1.3"/>
    </reaction>
</comment>
<comment type="cofactor">
    <cofactor evidence="1">
        <name>Zn(2+)</name>
        <dbReference type="ChEBI" id="CHEBI:29105"/>
    </cofactor>
    <text evidence="1">Binds 1 zinc ion per subunit.</text>
</comment>
<comment type="subunit">
    <text evidence="1">Homodimer.</text>
</comment>
<comment type="subcellular location">
    <subcellularLocation>
        <location evidence="1">Cytoplasm</location>
    </subcellularLocation>
</comment>
<comment type="similarity">
    <text evidence="1">Belongs to the class-II aminoacyl-tRNA synthetase family.</text>
</comment>